<organism>
    <name type="scientific">Pseudomonas fluorescens (strain ATCC BAA-477 / NRRL B-23932 / Pf-5)</name>
    <dbReference type="NCBI Taxonomy" id="220664"/>
    <lineage>
        <taxon>Bacteria</taxon>
        <taxon>Pseudomonadati</taxon>
        <taxon>Pseudomonadota</taxon>
        <taxon>Gammaproteobacteria</taxon>
        <taxon>Pseudomonadales</taxon>
        <taxon>Pseudomonadaceae</taxon>
        <taxon>Pseudomonas</taxon>
    </lineage>
</organism>
<dbReference type="EC" id="5.3.1.1" evidence="1"/>
<dbReference type="EMBL" id="CP000076">
    <property type="protein sequence ID" value="AAY96239.1"/>
    <property type="molecule type" value="Genomic_DNA"/>
</dbReference>
<dbReference type="RefSeq" id="WP_011059200.1">
    <property type="nucleotide sequence ID" value="NC_004129.6"/>
</dbReference>
<dbReference type="SMR" id="Q4KIF9"/>
<dbReference type="STRING" id="220664.PFL_0839"/>
<dbReference type="KEGG" id="pfl:PFL_0839"/>
<dbReference type="eggNOG" id="COG0149">
    <property type="taxonomic scope" value="Bacteria"/>
</dbReference>
<dbReference type="HOGENOM" id="CLU_024251_2_1_6"/>
<dbReference type="UniPathway" id="UPA00109">
    <property type="reaction ID" value="UER00189"/>
</dbReference>
<dbReference type="UniPathway" id="UPA00138"/>
<dbReference type="Proteomes" id="UP000008540">
    <property type="component" value="Chromosome"/>
</dbReference>
<dbReference type="GO" id="GO:0005829">
    <property type="term" value="C:cytosol"/>
    <property type="evidence" value="ECO:0007669"/>
    <property type="project" value="TreeGrafter"/>
</dbReference>
<dbReference type="GO" id="GO:0004807">
    <property type="term" value="F:triose-phosphate isomerase activity"/>
    <property type="evidence" value="ECO:0007669"/>
    <property type="project" value="UniProtKB-UniRule"/>
</dbReference>
<dbReference type="GO" id="GO:0006094">
    <property type="term" value="P:gluconeogenesis"/>
    <property type="evidence" value="ECO:0007669"/>
    <property type="project" value="UniProtKB-UniRule"/>
</dbReference>
<dbReference type="GO" id="GO:0046166">
    <property type="term" value="P:glyceraldehyde-3-phosphate biosynthetic process"/>
    <property type="evidence" value="ECO:0007669"/>
    <property type="project" value="TreeGrafter"/>
</dbReference>
<dbReference type="GO" id="GO:0019563">
    <property type="term" value="P:glycerol catabolic process"/>
    <property type="evidence" value="ECO:0007669"/>
    <property type="project" value="TreeGrafter"/>
</dbReference>
<dbReference type="GO" id="GO:0006096">
    <property type="term" value="P:glycolytic process"/>
    <property type="evidence" value="ECO:0007669"/>
    <property type="project" value="UniProtKB-UniRule"/>
</dbReference>
<dbReference type="CDD" id="cd00311">
    <property type="entry name" value="TIM"/>
    <property type="match status" value="1"/>
</dbReference>
<dbReference type="FunFam" id="3.20.20.70:FF:000016">
    <property type="entry name" value="Triosephosphate isomerase"/>
    <property type="match status" value="1"/>
</dbReference>
<dbReference type="Gene3D" id="3.20.20.70">
    <property type="entry name" value="Aldolase class I"/>
    <property type="match status" value="1"/>
</dbReference>
<dbReference type="HAMAP" id="MF_00147_B">
    <property type="entry name" value="TIM_B"/>
    <property type="match status" value="1"/>
</dbReference>
<dbReference type="InterPro" id="IPR013785">
    <property type="entry name" value="Aldolase_TIM"/>
</dbReference>
<dbReference type="InterPro" id="IPR035990">
    <property type="entry name" value="TIM_sf"/>
</dbReference>
<dbReference type="InterPro" id="IPR022896">
    <property type="entry name" value="TrioseP_Isoase_bac/euk"/>
</dbReference>
<dbReference type="InterPro" id="IPR000652">
    <property type="entry name" value="Triosephosphate_isomerase"/>
</dbReference>
<dbReference type="InterPro" id="IPR020861">
    <property type="entry name" value="Triosephosphate_isomerase_AS"/>
</dbReference>
<dbReference type="NCBIfam" id="TIGR00419">
    <property type="entry name" value="tim"/>
    <property type="match status" value="1"/>
</dbReference>
<dbReference type="PANTHER" id="PTHR21139">
    <property type="entry name" value="TRIOSEPHOSPHATE ISOMERASE"/>
    <property type="match status" value="1"/>
</dbReference>
<dbReference type="PANTHER" id="PTHR21139:SF42">
    <property type="entry name" value="TRIOSEPHOSPHATE ISOMERASE"/>
    <property type="match status" value="1"/>
</dbReference>
<dbReference type="Pfam" id="PF00121">
    <property type="entry name" value="TIM"/>
    <property type="match status" value="1"/>
</dbReference>
<dbReference type="SUPFAM" id="SSF51351">
    <property type="entry name" value="Triosephosphate isomerase (TIM)"/>
    <property type="match status" value="1"/>
</dbReference>
<dbReference type="PROSITE" id="PS00171">
    <property type="entry name" value="TIM_1"/>
    <property type="match status" value="1"/>
</dbReference>
<dbReference type="PROSITE" id="PS51440">
    <property type="entry name" value="TIM_2"/>
    <property type="match status" value="1"/>
</dbReference>
<keyword id="KW-0963">Cytoplasm</keyword>
<keyword id="KW-0312">Gluconeogenesis</keyword>
<keyword id="KW-0324">Glycolysis</keyword>
<keyword id="KW-0413">Isomerase</keyword>
<accession>Q4KIF9</accession>
<evidence type="ECO:0000255" key="1">
    <source>
        <dbReference type="HAMAP-Rule" id="MF_00147"/>
    </source>
</evidence>
<reference key="1">
    <citation type="journal article" date="2005" name="Nat. Biotechnol.">
        <title>Complete genome sequence of the plant commensal Pseudomonas fluorescens Pf-5.</title>
        <authorList>
            <person name="Paulsen I.T."/>
            <person name="Press C.M."/>
            <person name="Ravel J."/>
            <person name="Kobayashi D.Y."/>
            <person name="Myers G.S.A."/>
            <person name="Mavrodi D.V."/>
            <person name="DeBoy R.T."/>
            <person name="Seshadri R."/>
            <person name="Ren Q."/>
            <person name="Madupu R."/>
            <person name="Dodson R.J."/>
            <person name="Durkin A.S."/>
            <person name="Brinkac L.M."/>
            <person name="Daugherty S.C."/>
            <person name="Sullivan S.A."/>
            <person name="Rosovitz M.J."/>
            <person name="Gwinn M.L."/>
            <person name="Zhou L."/>
            <person name="Schneider D.J."/>
            <person name="Cartinhour S.W."/>
            <person name="Nelson W.C."/>
            <person name="Weidman J."/>
            <person name="Watkins K."/>
            <person name="Tran K."/>
            <person name="Khouri H."/>
            <person name="Pierson E.A."/>
            <person name="Pierson L.S. III"/>
            <person name="Thomashow L.S."/>
            <person name="Loper J.E."/>
        </authorList>
    </citation>
    <scope>NUCLEOTIDE SEQUENCE [LARGE SCALE GENOMIC DNA]</scope>
    <source>
        <strain>ATCC BAA-477 / NRRL B-23932 / Pf-5</strain>
    </source>
</reference>
<comment type="function">
    <text evidence="1">Involved in the gluconeogenesis. Catalyzes stereospecifically the conversion of dihydroxyacetone phosphate (DHAP) to D-glyceraldehyde-3-phosphate (G3P).</text>
</comment>
<comment type="catalytic activity">
    <reaction evidence="1">
        <text>D-glyceraldehyde 3-phosphate = dihydroxyacetone phosphate</text>
        <dbReference type="Rhea" id="RHEA:18585"/>
        <dbReference type="ChEBI" id="CHEBI:57642"/>
        <dbReference type="ChEBI" id="CHEBI:59776"/>
        <dbReference type="EC" id="5.3.1.1"/>
    </reaction>
</comment>
<comment type="pathway">
    <text evidence="1">Carbohydrate biosynthesis; gluconeogenesis.</text>
</comment>
<comment type="pathway">
    <text evidence="1">Carbohydrate degradation; glycolysis; D-glyceraldehyde 3-phosphate from glycerone phosphate: step 1/1.</text>
</comment>
<comment type="subunit">
    <text evidence="1">Homodimer.</text>
</comment>
<comment type="subcellular location">
    <subcellularLocation>
        <location evidence="1">Cytoplasm</location>
    </subcellularLocation>
</comment>
<comment type="similarity">
    <text evidence="1">Belongs to the triosephosphate isomerase family.</text>
</comment>
<proteinExistence type="inferred from homology"/>
<protein>
    <recommendedName>
        <fullName evidence="1">Triosephosphate isomerase</fullName>
        <shortName evidence="1">TIM</shortName>
        <shortName evidence="1">TPI</shortName>
        <ecNumber evidence="1">5.3.1.1</ecNumber>
    </recommendedName>
    <alternativeName>
        <fullName evidence="1">Triose-phosphate isomerase</fullName>
    </alternativeName>
</protein>
<feature type="chain" id="PRO_0000307535" description="Triosephosphate isomerase">
    <location>
        <begin position="1"/>
        <end position="251"/>
    </location>
</feature>
<feature type="active site" description="Electrophile" evidence="1">
    <location>
        <position position="95"/>
    </location>
</feature>
<feature type="active site" description="Proton acceptor" evidence="1">
    <location>
        <position position="167"/>
    </location>
</feature>
<feature type="binding site" evidence="1">
    <location>
        <begin position="9"/>
        <end position="11"/>
    </location>
    <ligand>
        <name>substrate</name>
    </ligand>
</feature>
<feature type="binding site" evidence="1">
    <location>
        <position position="173"/>
    </location>
    <ligand>
        <name>substrate</name>
    </ligand>
</feature>
<feature type="binding site" evidence="1">
    <location>
        <position position="212"/>
    </location>
    <ligand>
        <name>substrate</name>
    </ligand>
</feature>
<feature type="binding site" evidence="1">
    <location>
        <begin position="233"/>
        <end position="234"/>
    </location>
    <ligand>
        <name>substrate</name>
    </ligand>
</feature>
<gene>
    <name evidence="1" type="primary">tpiA</name>
    <name type="ordered locus">PFL_0839</name>
</gene>
<name>TPIS_PSEF5</name>
<sequence length="251" mass="26036">MRRPMVAGNWKMHGTRASVAELINGLRHLALPSGVDVAVFPPCLYINQVIDGLKGKSIQVGAQNSAVESMQGALTGEIAPSQLVDAGCSLVLVGHSERRLIMGERDATLNRKFAAAQACGLKPVLCVGETLEQREAGKTLEVVGRQLGSIIEELGVGAFANAVIAYEPVWAIGTGLTATPQQAQDVHAAIRAQLAAENSEVARGVRLLYGGSVKAANAVELFGMPDIDGGLIGGASLNADEFGAICRAAGN</sequence>